<reference key="1">
    <citation type="journal article" date="1997" name="Biochem. Biophys. Res. Commun.">
        <title>The human guanidinoacetate methyltransferase (GAMT) gene maps to a syntenic region on 19p13.3, homologous to band C of mouse chromosome 10, but GAMT is not mutated in jittery mice.</title>
        <authorList>
            <person name="Jenne D.E."/>
            <person name="Olsen A.S."/>
            <person name="Zimmer M."/>
        </authorList>
    </citation>
    <scope>NUCLEOTIDE SEQUENCE [GENOMIC DNA / MRNA] (ISOFORM 1)</scope>
    <source>
        <strain>C57BL/6J</strain>
    </source>
</reference>
<reference key="2">
    <citation type="journal article" date="2005" name="Science">
        <title>The transcriptional landscape of the mammalian genome.</title>
        <authorList>
            <person name="Carninci P."/>
            <person name="Kasukawa T."/>
            <person name="Katayama S."/>
            <person name="Gough J."/>
            <person name="Frith M.C."/>
            <person name="Maeda N."/>
            <person name="Oyama R."/>
            <person name="Ravasi T."/>
            <person name="Lenhard B."/>
            <person name="Wells C."/>
            <person name="Kodzius R."/>
            <person name="Shimokawa K."/>
            <person name="Bajic V.B."/>
            <person name="Brenner S.E."/>
            <person name="Batalov S."/>
            <person name="Forrest A.R."/>
            <person name="Zavolan M."/>
            <person name="Davis M.J."/>
            <person name="Wilming L.G."/>
            <person name="Aidinis V."/>
            <person name="Allen J.E."/>
            <person name="Ambesi-Impiombato A."/>
            <person name="Apweiler R."/>
            <person name="Aturaliya R.N."/>
            <person name="Bailey T.L."/>
            <person name="Bansal M."/>
            <person name="Baxter L."/>
            <person name="Beisel K.W."/>
            <person name="Bersano T."/>
            <person name="Bono H."/>
            <person name="Chalk A.M."/>
            <person name="Chiu K.P."/>
            <person name="Choudhary V."/>
            <person name="Christoffels A."/>
            <person name="Clutterbuck D.R."/>
            <person name="Crowe M.L."/>
            <person name="Dalla E."/>
            <person name="Dalrymple B.P."/>
            <person name="de Bono B."/>
            <person name="Della Gatta G."/>
            <person name="di Bernardo D."/>
            <person name="Down T."/>
            <person name="Engstrom P."/>
            <person name="Fagiolini M."/>
            <person name="Faulkner G."/>
            <person name="Fletcher C.F."/>
            <person name="Fukushima T."/>
            <person name="Furuno M."/>
            <person name="Futaki S."/>
            <person name="Gariboldi M."/>
            <person name="Georgii-Hemming P."/>
            <person name="Gingeras T.R."/>
            <person name="Gojobori T."/>
            <person name="Green R.E."/>
            <person name="Gustincich S."/>
            <person name="Harbers M."/>
            <person name="Hayashi Y."/>
            <person name="Hensch T.K."/>
            <person name="Hirokawa N."/>
            <person name="Hill D."/>
            <person name="Huminiecki L."/>
            <person name="Iacono M."/>
            <person name="Ikeo K."/>
            <person name="Iwama A."/>
            <person name="Ishikawa T."/>
            <person name="Jakt M."/>
            <person name="Kanapin A."/>
            <person name="Katoh M."/>
            <person name="Kawasawa Y."/>
            <person name="Kelso J."/>
            <person name="Kitamura H."/>
            <person name="Kitano H."/>
            <person name="Kollias G."/>
            <person name="Krishnan S.P."/>
            <person name="Kruger A."/>
            <person name="Kummerfeld S.K."/>
            <person name="Kurochkin I.V."/>
            <person name="Lareau L.F."/>
            <person name="Lazarevic D."/>
            <person name="Lipovich L."/>
            <person name="Liu J."/>
            <person name="Liuni S."/>
            <person name="McWilliam S."/>
            <person name="Madan Babu M."/>
            <person name="Madera M."/>
            <person name="Marchionni L."/>
            <person name="Matsuda H."/>
            <person name="Matsuzawa S."/>
            <person name="Miki H."/>
            <person name="Mignone F."/>
            <person name="Miyake S."/>
            <person name="Morris K."/>
            <person name="Mottagui-Tabar S."/>
            <person name="Mulder N."/>
            <person name="Nakano N."/>
            <person name="Nakauchi H."/>
            <person name="Ng P."/>
            <person name="Nilsson R."/>
            <person name="Nishiguchi S."/>
            <person name="Nishikawa S."/>
            <person name="Nori F."/>
            <person name="Ohara O."/>
            <person name="Okazaki Y."/>
            <person name="Orlando V."/>
            <person name="Pang K.C."/>
            <person name="Pavan W.J."/>
            <person name="Pavesi G."/>
            <person name="Pesole G."/>
            <person name="Petrovsky N."/>
            <person name="Piazza S."/>
            <person name="Reed J."/>
            <person name="Reid J.F."/>
            <person name="Ring B.Z."/>
            <person name="Ringwald M."/>
            <person name="Rost B."/>
            <person name="Ruan Y."/>
            <person name="Salzberg S.L."/>
            <person name="Sandelin A."/>
            <person name="Schneider C."/>
            <person name="Schoenbach C."/>
            <person name="Sekiguchi K."/>
            <person name="Semple C.A."/>
            <person name="Seno S."/>
            <person name="Sessa L."/>
            <person name="Sheng Y."/>
            <person name="Shibata Y."/>
            <person name="Shimada H."/>
            <person name="Shimada K."/>
            <person name="Silva D."/>
            <person name="Sinclair B."/>
            <person name="Sperling S."/>
            <person name="Stupka E."/>
            <person name="Sugiura K."/>
            <person name="Sultana R."/>
            <person name="Takenaka Y."/>
            <person name="Taki K."/>
            <person name="Tammoja K."/>
            <person name="Tan S.L."/>
            <person name="Tang S."/>
            <person name="Taylor M.S."/>
            <person name="Tegner J."/>
            <person name="Teichmann S.A."/>
            <person name="Ueda H.R."/>
            <person name="van Nimwegen E."/>
            <person name="Verardo R."/>
            <person name="Wei C.L."/>
            <person name="Yagi K."/>
            <person name="Yamanishi H."/>
            <person name="Zabarovsky E."/>
            <person name="Zhu S."/>
            <person name="Zimmer A."/>
            <person name="Hide W."/>
            <person name="Bult C."/>
            <person name="Grimmond S.M."/>
            <person name="Teasdale R.D."/>
            <person name="Liu E.T."/>
            <person name="Brusic V."/>
            <person name="Quackenbush J."/>
            <person name="Wahlestedt C."/>
            <person name="Mattick J.S."/>
            <person name="Hume D.A."/>
            <person name="Kai C."/>
            <person name="Sasaki D."/>
            <person name="Tomaru Y."/>
            <person name="Fukuda S."/>
            <person name="Kanamori-Katayama M."/>
            <person name="Suzuki M."/>
            <person name="Aoki J."/>
            <person name="Arakawa T."/>
            <person name="Iida J."/>
            <person name="Imamura K."/>
            <person name="Itoh M."/>
            <person name="Kato T."/>
            <person name="Kawaji H."/>
            <person name="Kawagashira N."/>
            <person name="Kawashima T."/>
            <person name="Kojima M."/>
            <person name="Kondo S."/>
            <person name="Konno H."/>
            <person name="Nakano K."/>
            <person name="Ninomiya N."/>
            <person name="Nishio T."/>
            <person name="Okada M."/>
            <person name="Plessy C."/>
            <person name="Shibata K."/>
            <person name="Shiraki T."/>
            <person name="Suzuki S."/>
            <person name="Tagami M."/>
            <person name="Waki K."/>
            <person name="Watahiki A."/>
            <person name="Okamura-Oho Y."/>
            <person name="Suzuki H."/>
            <person name="Kawai J."/>
            <person name="Hayashizaki Y."/>
        </authorList>
    </citation>
    <scope>NUCLEOTIDE SEQUENCE [LARGE SCALE MRNA] (ISOFORMS 1 AND 2)</scope>
    <source>
        <strain>C57BL/6J</strain>
        <tissue>Cerebellum</tissue>
        <tissue>Inner ear</tissue>
    </source>
</reference>
<reference key="3">
    <citation type="journal article" date="2004" name="Genome Res.">
        <title>The status, quality, and expansion of the NIH full-length cDNA project: the Mammalian Gene Collection (MGC).</title>
        <authorList>
            <consortium name="The MGC Project Team"/>
        </authorList>
    </citation>
    <scope>NUCLEOTIDE SEQUENCE [LARGE SCALE MRNA] (ISOFORM 1)</scope>
    <source>
        <strain>FVB/N</strain>
        <tissue>Liver</tissue>
    </source>
</reference>
<reference key="4">
    <citation type="journal article" date="1994" name="Biol. Reprod.">
        <title>Guanidinoacetate methyltransferase in the mouse: extensive expression in Sertoli cells of testis and in microvilli of caput epididymis.</title>
        <authorList>
            <person name="Lee H."/>
            <person name="Ogawa H."/>
            <person name="Fujioka M."/>
            <person name="Gerton G.L."/>
        </authorList>
    </citation>
    <scope>TISSUE SPECIFICITY</scope>
    <scope>SUBCELLULAR LOCATION</scope>
</reference>
<reference key="5">
    <citation type="journal article" date="2004" name="Eur. J. Neurosci.">
        <title>Distinct cellular expressions of creatine synthetic enzyme GAMT and creatine kinases uCK-Mi and CK-B suggest a novel neuron-glial relationship for brain energy homeostasis.</title>
        <authorList>
            <person name="Tachikawa M."/>
            <person name="Fukaya M."/>
            <person name="Terasaki T."/>
            <person name="Ohtsuki S."/>
            <person name="Watanabe M."/>
        </authorList>
    </citation>
    <scope>TISSUE SPECIFICITY</scope>
</reference>
<reference key="6">
    <citation type="journal article" date="2010" name="Cell">
        <title>A tissue-specific atlas of mouse protein phosphorylation and expression.</title>
        <authorList>
            <person name="Huttlin E.L."/>
            <person name="Jedrychowski M.P."/>
            <person name="Elias J.E."/>
            <person name="Goswami T."/>
            <person name="Rad R."/>
            <person name="Beausoleil S.A."/>
            <person name="Villen J."/>
            <person name="Haas W."/>
            <person name="Sowa M.E."/>
            <person name="Gygi S.P."/>
        </authorList>
    </citation>
    <scope>IDENTIFICATION BY MASS SPECTROMETRY [LARGE SCALE ANALYSIS]</scope>
    <source>
        <tissue>Brain</tissue>
        <tissue>Brown adipose tissue</tissue>
        <tissue>Heart</tissue>
        <tissue>Kidney</tissue>
        <tissue>Liver</tissue>
        <tissue>Lung</tissue>
        <tissue>Pancreas</tissue>
        <tissue>Spleen</tissue>
        <tissue>Testis</tissue>
    </source>
</reference>
<proteinExistence type="evidence at protein level"/>
<evidence type="ECO:0000250" key="1"/>
<evidence type="ECO:0000250" key="2">
    <source>
        <dbReference type="UniProtKB" id="P10868"/>
    </source>
</evidence>
<evidence type="ECO:0000250" key="3">
    <source>
        <dbReference type="UniProtKB" id="Q14353"/>
    </source>
</evidence>
<evidence type="ECO:0000255" key="4">
    <source>
        <dbReference type="PROSITE-ProRule" id="PRU00892"/>
    </source>
</evidence>
<evidence type="ECO:0000269" key="5">
    <source>
    </source>
</evidence>
<evidence type="ECO:0000269" key="6">
    <source>
    </source>
</evidence>
<evidence type="ECO:0000303" key="7">
    <source>
    </source>
</evidence>
<sequence length="236" mass="26336">MSSSAASPLFAPGEDCGPAWRAAPAAYDASDTHLQILGKPVMERWETPYMHALAAAAASRGGRVLEVGFGMAIAASRVQQAPIEEHWIIECNDGVFQRLQDWALRQPHKVVPLKGLWEEVAPTLPDGHFDGILYDTYPLSEEAWHTHQFNFIKNHAFRLLKTGGVLTYCNLTSWGELMKSKYTDITTMFEETQVPALQEAGFLKENICTEVMALVPPADCRYYAFPQMITPLVTKH</sequence>
<gene>
    <name type="primary">Gamt</name>
</gene>
<keyword id="KW-0007">Acetylation</keyword>
<keyword id="KW-0025">Alternative splicing</keyword>
<keyword id="KW-0966">Cell projection</keyword>
<keyword id="KW-0489">Methyltransferase</keyword>
<keyword id="KW-0597">Phosphoprotein</keyword>
<keyword id="KW-1185">Reference proteome</keyword>
<keyword id="KW-0949">S-adenosyl-L-methionine</keyword>
<keyword id="KW-0808">Transferase</keyword>
<accession>O35969</accession>
<accession>Q3TZ58</accession>
<accession>Q3US90</accession>
<comment type="function">
    <text evidence="3">Converts guanidinoacetate to creatine, using S-adenosylmethionine as the methyl donor. Important in nervous system development.</text>
</comment>
<comment type="catalytic activity">
    <reaction evidence="4">
        <text>guanidinoacetate + S-adenosyl-L-methionine = creatine + S-adenosyl-L-homocysteine + H(+)</text>
        <dbReference type="Rhea" id="RHEA:10656"/>
        <dbReference type="ChEBI" id="CHEBI:15378"/>
        <dbReference type="ChEBI" id="CHEBI:57742"/>
        <dbReference type="ChEBI" id="CHEBI:57856"/>
        <dbReference type="ChEBI" id="CHEBI:57947"/>
        <dbReference type="ChEBI" id="CHEBI:59789"/>
        <dbReference type="EC" id="2.1.1.2"/>
    </reaction>
</comment>
<comment type="pathway">
    <text>Amine and polyamine biosynthesis; creatine biosynthesis; creatine from L-arginine and glycine: step 2/2.</text>
</comment>
<comment type="subunit">
    <text evidence="1">Monomer.</text>
</comment>
<comment type="subcellular location">
    <subcellularLocation>
        <location evidence="6">Cell projection</location>
        <location evidence="6">Microvillus</location>
    </subcellularLocation>
    <text>Detected in microvilli of the epithelial cells lining the caput epididymis.</text>
</comment>
<comment type="alternative products">
    <event type="alternative splicing"/>
    <isoform>
        <id>O35969-1</id>
        <name>1</name>
        <sequence type="displayed"/>
    </isoform>
    <isoform>
        <id>O35969-2</id>
        <name>2</name>
        <sequence type="described" ref="VSP_017727"/>
    </isoform>
</comment>
<comment type="tissue specificity">
    <text evidence="5 6">Highly expressed in testis, caput epididymis, ovary, and liver. In the testis, localized primarily in Sertoli cells. Expressed in brain with high levels in oligodendrocytes and olfactory ensheathing glia. Moderate levels of expression in astrocytes.</text>
</comment>
<comment type="similarity">
    <text evidence="4">Belongs to the class I-like SAM-binding methyltransferase superfamily. RMT2 methyltransferase family.</text>
</comment>
<protein>
    <recommendedName>
        <fullName>Guanidinoacetate N-methyltransferase</fullName>
        <ecNumber>2.1.1.2</ecNumber>
    </recommendedName>
</protein>
<name>GAMT_MOUSE</name>
<dbReference type="EC" id="2.1.1.2"/>
<dbReference type="EMBL" id="AF015887">
    <property type="protein sequence ID" value="AAB81495.1"/>
    <property type="molecule type" value="mRNA"/>
</dbReference>
<dbReference type="EMBL" id="AF010499">
    <property type="protein sequence ID" value="AAB81498.1"/>
    <property type="molecule type" value="Genomic_DNA"/>
</dbReference>
<dbReference type="EMBL" id="AF010498">
    <property type="protein sequence ID" value="AAB81498.1"/>
    <property type="status" value="JOINED"/>
    <property type="molecule type" value="Genomic_DNA"/>
</dbReference>
<dbReference type="EMBL" id="AK140688">
    <property type="protein sequence ID" value="BAE24443.1"/>
    <property type="molecule type" value="mRNA"/>
</dbReference>
<dbReference type="EMBL" id="AK158087">
    <property type="protein sequence ID" value="BAE34352.1"/>
    <property type="molecule type" value="mRNA"/>
</dbReference>
<dbReference type="EMBL" id="BC049233">
    <property type="protein sequence ID" value="AAH49233.1"/>
    <property type="molecule type" value="mRNA"/>
</dbReference>
<dbReference type="CCDS" id="CCDS35976.1">
    <molecule id="O35969-1"/>
</dbReference>
<dbReference type="CCDS" id="CCDS83728.1">
    <molecule id="O35969-2"/>
</dbReference>
<dbReference type="PIR" id="JC5664">
    <property type="entry name" value="JC5664"/>
</dbReference>
<dbReference type="RefSeq" id="NP_001334048.1">
    <molecule id="O35969-2"/>
    <property type="nucleotide sequence ID" value="NM_001347119.1"/>
</dbReference>
<dbReference type="RefSeq" id="NP_034385.1">
    <molecule id="O35969-1"/>
    <property type="nucleotide sequence ID" value="NM_010255.4"/>
</dbReference>
<dbReference type="SMR" id="O35969"/>
<dbReference type="FunCoup" id="O35969">
    <property type="interactions" value="1558"/>
</dbReference>
<dbReference type="STRING" id="10090.ENSMUSP00000020359"/>
<dbReference type="GlyGen" id="O35969">
    <property type="glycosylation" value="1 site, 1 N-linked glycan (1 site)"/>
</dbReference>
<dbReference type="iPTMnet" id="O35969"/>
<dbReference type="PhosphoSitePlus" id="O35969"/>
<dbReference type="SwissPalm" id="O35969"/>
<dbReference type="REPRODUCTION-2DPAGE" id="IPI00742399"/>
<dbReference type="REPRODUCTION-2DPAGE" id="O35969"/>
<dbReference type="jPOST" id="O35969"/>
<dbReference type="PaxDb" id="10090-ENSMUSP00000101002"/>
<dbReference type="PeptideAtlas" id="O35969"/>
<dbReference type="ProteomicsDB" id="267764">
    <molecule id="O35969-1"/>
</dbReference>
<dbReference type="ProteomicsDB" id="267765">
    <molecule id="O35969-2"/>
</dbReference>
<dbReference type="Pumba" id="O35969"/>
<dbReference type="Antibodypedia" id="22677">
    <property type="antibodies" value="236 antibodies from 29 providers"/>
</dbReference>
<dbReference type="DNASU" id="14431"/>
<dbReference type="Ensembl" id="ENSMUST00000020359.7">
    <molecule id="O35969-2"/>
    <property type="protein sequence ID" value="ENSMUSP00000020359.7"/>
    <property type="gene ID" value="ENSMUSG00000020150.14"/>
</dbReference>
<dbReference type="Ensembl" id="ENSMUST00000105363.8">
    <molecule id="O35969-1"/>
    <property type="protein sequence ID" value="ENSMUSP00000101002.2"/>
    <property type="gene ID" value="ENSMUSG00000020150.14"/>
</dbReference>
<dbReference type="GeneID" id="14431"/>
<dbReference type="KEGG" id="mmu:14431"/>
<dbReference type="UCSC" id="uc007gcj.2">
    <molecule id="O35969-1"/>
    <property type="organism name" value="mouse"/>
</dbReference>
<dbReference type="UCSC" id="uc011xio.1">
    <molecule id="O35969-2"/>
    <property type="organism name" value="mouse"/>
</dbReference>
<dbReference type="AGR" id="MGI:1098221"/>
<dbReference type="CTD" id="2593"/>
<dbReference type="MGI" id="MGI:1098221">
    <property type="gene designation" value="Gamt"/>
</dbReference>
<dbReference type="VEuPathDB" id="HostDB:ENSMUSG00000020150"/>
<dbReference type="eggNOG" id="KOG1709">
    <property type="taxonomic scope" value="Eukaryota"/>
</dbReference>
<dbReference type="GeneTree" id="ENSGT00390000018061"/>
<dbReference type="HOGENOM" id="CLU_102800_0_0_1"/>
<dbReference type="InParanoid" id="O35969"/>
<dbReference type="OMA" id="HKMITPT"/>
<dbReference type="OrthoDB" id="22187at9989"/>
<dbReference type="PhylomeDB" id="O35969"/>
<dbReference type="TreeFam" id="TF328555"/>
<dbReference type="BRENDA" id="2.1.1.2">
    <property type="organism ID" value="3474"/>
</dbReference>
<dbReference type="Reactome" id="R-MMU-71288">
    <property type="pathway name" value="Creatine metabolism"/>
</dbReference>
<dbReference type="UniPathway" id="UPA00104">
    <property type="reaction ID" value="UER00580"/>
</dbReference>
<dbReference type="BioGRID-ORCS" id="14431">
    <property type="hits" value="0 hits in 76 CRISPR screens"/>
</dbReference>
<dbReference type="PRO" id="PR:O35969"/>
<dbReference type="Proteomes" id="UP000000589">
    <property type="component" value="Chromosome 10"/>
</dbReference>
<dbReference type="RNAct" id="O35969">
    <property type="molecule type" value="protein"/>
</dbReference>
<dbReference type="Bgee" id="ENSMUSG00000020150">
    <property type="expression patterns" value="Expressed in left lobe of liver and 176 other cell types or tissues"/>
</dbReference>
<dbReference type="GO" id="GO:0005829">
    <property type="term" value="C:cytosol"/>
    <property type="evidence" value="ECO:0000304"/>
    <property type="project" value="Reactome"/>
</dbReference>
<dbReference type="GO" id="GO:0005902">
    <property type="term" value="C:microvillus"/>
    <property type="evidence" value="ECO:0007669"/>
    <property type="project" value="UniProtKB-SubCell"/>
</dbReference>
<dbReference type="GO" id="GO:0030731">
    <property type="term" value="F:guanidinoacetate N-methyltransferase activity"/>
    <property type="evidence" value="ECO:0000250"/>
    <property type="project" value="UniProtKB"/>
</dbReference>
<dbReference type="GO" id="GO:0009887">
    <property type="term" value="P:animal organ morphogenesis"/>
    <property type="evidence" value="ECO:0000315"/>
    <property type="project" value="MGI"/>
</dbReference>
<dbReference type="GO" id="GO:0006601">
    <property type="term" value="P:creatine biosynthetic process"/>
    <property type="evidence" value="ECO:0000315"/>
    <property type="project" value="MGI"/>
</dbReference>
<dbReference type="GO" id="GO:0032259">
    <property type="term" value="P:methylation"/>
    <property type="evidence" value="ECO:0007669"/>
    <property type="project" value="UniProtKB-KW"/>
</dbReference>
<dbReference type="GO" id="GO:0040014">
    <property type="term" value="P:regulation of multicellular organism growth"/>
    <property type="evidence" value="ECO:0000315"/>
    <property type="project" value="MGI"/>
</dbReference>
<dbReference type="GO" id="GO:0007283">
    <property type="term" value="P:spermatogenesis"/>
    <property type="evidence" value="ECO:0000315"/>
    <property type="project" value="MGI"/>
</dbReference>
<dbReference type="CDD" id="cd02440">
    <property type="entry name" value="AdoMet_MTases"/>
    <property type="match status" value="1"/>
</dbReference>
<dbReference type="FunFam" id="3.40.50.150:FF:000096">
    <property type="entry name" value="Guanidinoacetate N-methyltransferase"/>
    <property type="match status" value="1"/>
</dbReference>
<dbReference type="Gene3D" id="3.40.50.150">
    <property type="entry name" value="Vaccinia Virus protein VP39"/>
    <property type="match status" value="1"/>
</dbReference>
<dbReference type="InterPro" id="IPR016550">
    <property type="entry name" value="GuanidinoAc_N-MeTrfase"/>
</dbReference>
<dbReference type="InterPro" id="IPR051038">
    <property type="entry name" value="RMT2/GAMT_Mtase"/>
</dbReference>
<dbReference type="InterPro" id="IPR026480">
    <property type="entry name" value="RMT2_dom"/>
</dbReference>
<dbReference type="InterPro" id="IPR029063">
    <property type="entry name" value="SAM-dependent_MTases_sf"/>
</dbReference>
<dbReference type="PANTHER" id="PTHR32379">
    <property type="entry name" value="GUANIDINOACETATE N-METHYLTRANSFERASE"/>
    <property type="match status" value="1"/>
</dbReference>
<dbReference type="PANTHER" id="PTHR32379:SF1">
    <property type="entry name" value="GUANIDINOACETATE N-METHYLTRANSFERASE"/>
    <property type="match status" value="1"/>
</dbReference>
<dbReference type="PIRSF" id="PIRSF009285">
    <property type="entry name" value="GAMT"/>
    <property type="match status" value="1"/>
</dbReference>
<dbReference type="SUPFAM" id="SSF53335">
    <property type="entry name" value="S-adenosyl-L-methionine-dependent methyltransferases"/>
    <property type="match status" value="1"/>
</dbReference>
<dbReference type="PROSITE" id="PS51559">
    <property type="entry name" value="SAM_RMT2"/>
    <property type="match status" value="1"/>
</dbReference>
<organism>
    <name type="scientific">Mus musculus</name>
    <name type="common">Mouse</name>
    <dbReference type="NCBI Taxonomy" id="10090"/>
    <lineage>
        <taxon>Eukaryota</taxon>
        <taxon>Metazoa</taxon>
        <taxon>Chordata</taxon>
        <taxon>Craniata</taxon>
        <taxon>Vertebrata</taxon>
        <taxon>Euteleostomi</taxon>
        <taxon>Mammalia</taxon>
        <taxon>Eutheria</taxon>
        <taxon>Euarchontoglires</taxon>
        <taxon>Glires</taxon>
        <taxon>Rodentia</taxon>
        <taxon>Myomorpha</taxon>
        <taxon>Muroidea</taxon>
        <taxon>Muridae</taxon>
        <taxon>Murinae</taxon>
        <taxon>Mus</taxon>
        <taxon>Mus</taxon>
    </lineage>
</organism>
<feature type="initiator methionine" description="Removed" evidence="3">
    <location>
        <position position="1"/>
    </location>
</feature>
<feature type="chain" id="PRO_0000087431" description="Guanidinoacetate N-methyltransferase">
    <location>
        <begin position="2"/>
        <end position="236"/>
    </location>
</feature>
<feature type="domain" description="RMT2" evidence="4">
    <location>
        <begin position="13"/>
        <end position="236"/>
    </location>
</feature>
<feature type="binding site" evidence="4">
    <location>
        <position position="20"/>
    </location>
    <ligand>
        <name>S-adenosyl-L-methionine</name>
        <dbReference type="ChEBI" id="CHEBI:59789"/>
    </ligand>
</feature>
<feature type="binding site" evidence="2 4">
    <location>
        <position position="42"/>
    </location>
    <ligand>
        <name>guanidinoacetate</name>
        <dbReference type="ChEBI" id="CHEBI:57742"/>
    </ligand>
</feature>
<feature type="binding site" evidence="2 4">
    <location>
        <position position="46"/>
    </location>
    <ligand>
        <name>guanidinoacetate</name>
        <dbReference type="ChEBI" id="CHEBI:57742"/>
    </ligand>
</feature>
<feature type="binding site" evidence="4">
    <location>
        <position position="50"/>
    </location>
    <ligand>
        <name>S-adenosyl-L-methionine</name>
        <dbReference type="ChEBI" id="CHEBI:59789"/>
    </ligand>
</feature>
<feature type="binding site" evidence="4">
    <location>
        <begin position="69"/>
        <end position="74"/>
    </location>
    <ligand>
        <name>S-adenosyl-L-methionine</name>
        <dbReference type="ChEBI" id="CHEBI:59789"/>
    </ligand>
</feature>
<feature type="binding site" evidence="4">
    <location>
        <begin position="90"/>
        <end position="92"/>
    </location>
    <ligand>
        <name>S-adenosyl-L-methionine</name>
        <dbReference type="ChEBI" id="CHEBI:59789"/>
    </ligand>
</feature>
<feature type="binding site" evidence="4">
    <location>
        <begin position="117"/>
        <end position="118"/>
    </location>
    <ligand>
        <name>S-adenosyl-L-methionine</name>
        <dbReference type="ChEBI" id="CHEBI:59789"/>
    </ligand>
</feature>
<feature type="binding site" evidence="2">
    <location>
        <position position="135"/>
    </location>
    <ligand>
        <name>guanidinoacetate</name>
        <dbReference type="ChEBI" id="CHEBI:57742"/>
    </ligand>
</feature>
<feature type="binding site" evidence="4">
    <location>
        <position position="135"/>
    </location>
    <ligand>
        <name>S-adenosyl-L-methionine</name>
        <dbReference type="ChEBI" id="CHEBI:59789"/>
    </ligand>
</feature>
<feature type="binding site" evidence="2">
    <location>
        <begin position="171"/>
        <end position="172"/>
    </location>
    <ligand>
        <name>guanidinoacetate</name>
        <dbReference type="ChEBI" id="CHEBI:57742"/>
    </ligand>
</feature>
<feature type="modified residue" description="N-acetylserine" evidence="3">
    <location>
        <position position="2"/>
    </location>
</feature>
<feature type="modified residue" description="Phosphoserine" evidence="2">
    <location>
        <position position="7"/>
    </location>
</feature>
<feature type="splice variant" id="VSP_017727" description="In isoform 2." evidence="7">
    <original>K</original>
    <variation>KLSSHGPTPSCPLASLQ</variation>
    <location>
        <position position="153"/>
    </location>
</feature>